<protein>
    <recommendedName>
        <fullName>L-2,4-diaminobutyrate decarboxylase</fullName>
        <shortName>DABA decarboxylase</shortName>
        <shortName>DABA-DC</shortName>
        <ecNumber>4.1.1.86</ecNumber>
    </recommendedName>
</protein>
<keyword id="KW-0210">Decarboxylase</keyword>
<keyword id="KW-0903">Direct protein sequencing</keyword>
<keyword id="KW-0456">Lyase</keyword>
<keyword id="KW-0663">Pyridoxal phosphate</keyword>
<dbReference type="EC" id="4.1.1.86"/>
<dbReference type="EMBL" id="D55724">
    <property type="protein sequence ID" value="BAA09538.1"/>
    <property type="molecule type" value="Genomic_DNA"/>
</dbReference>
<dbReference type="SMR" id="Q43908"/>
<dbReference type="STRING" id="400667.A1S_2453"/>
<dbReference type="KEGG" id="ag:BAA09538"/>
<dbReference type="eggNOG" id="COG0076">
    <property type="taxonomic scope" value="Bacteria"/>
</dbReference>
<dbReference type="BRENDA" id="4.1.1.86">
    <property type="organism ID" value="98"/>
</dbReference>
<dbReference type="UniPathway" id="UPA00010">
    <property type="reaction ID" value="UER00732"/>
</dbReference>
<dbReference type="GO" id="GO:0005737">
    <property type="term" value="C:cytoplasm"/>
    <property type="evidence" value="ECO:0007669"/>
    <property type="project" value="TreeGrafter"/>
</dbReference>
<dbReference type="GO" id="GO:0033983">
    <property type="term" value="F:diaminobutyrate decarboxylase activity"/>
    <property type="evidence" value="ECO:0007669"/>
    <property type="project" value="UniProtKB-EC"/>
</dbReference>
<dbReference type="GO" id="GO:0030170">
    <property type="term" value="F:pyridoxal phosphate binding"/>
    <property type="evidence" value="ECO:0007669"/>
    <property type="project" value="InterPro"/>
</dbReference>
<dbReference type="GO" id="GO:0019752">
    <property type="term" value="P:carboxylic acid metabolic process"/>
    <property type="evidence" value="ECO:0007669"/>
    <property type="project" value="InterPro"/>
</dbReference>
<dbReference type="CDD" id="cd06450">
    <property type="entry name" value="DOPA_deC_like"/>
    <property type="match status" value="1"/>
</dbReference>
<dbReference type="Gene3D" id="3.90.1150.170">
    <property type="match status" value="1"/>
</dbReference>
<dbReference type="Gene3D" id="3.40.640.10">
    <property type="entry name" value="Type I PLP-dependent aspartate aminotransferase-like (Major domain)"/>
    <property type="match status" value="1"/>
</dbReference>
<dbReference type="InterPro" id="IPR002129">
    <property type="entry name" value="PyrdxlP-dep_de-COase"/>
</dbReference>
<dbReference type="InterPro" id="IPR015424">
    <property type="entry name" value="PyrdxlP-dep_Trfase"/>
</dbReference>
<dbReference type="InterPro" id="IPR015421">
    <property type="entry name" value="PyrdxlP-dep_Trfase_major"/>
</dbReference>
<dbReference type="InterPro" id="IPR021115">
    <property type="entry name" value="Pyridoxal-P_BS"/>
</dbReference>
<dbReference type="PANTHER" id="PTHR45677:SF8">
    <property type="entry name" value="CYSTEINE SULFINIC ACID DECARBOXYLASE"/>
    <property type="match status" value="1"/>
</dbReference>
<dbReference type="PANTHER" id="PTHR45677">
    <property type="entry name" value="GLUTAMATE DECARBOXYLASE-RELATED"/>
    <property type="match status" value="1"/>
</dbReference>
<dbReference type="Pfam" id="PF00282">
    <property type="entry name" value="Pyridoxal_deC"/>
    <property type="match status" value="1"/>
</dbReference>
<dbReference type="SUPFAM" id="SSF53383">
    <property type="entry name" value="PLP-dependent transferases"/>
    <property type="match status" value="1"/>
</dbReference>
<dbReference type="PROSITE" id="PS00392">
    <property type="entry name" value="DDC_GAD_HDC_YDC"/>
    <property type="match status" value="1"/>
</dbReference>
<evidence type="ECO:0000250" key="1"/>
<evidence type="ECO:0000305" key="2"/>
<reference key="1">
    <citation type="journal article" date="1996" name="Arch. Microbiol.">
        <title>Sequence analysis of the gene encoding a novel L-2,4-diaminobutyrate decarboxylase of Acinetobacter baumannii: similarity to the group II amino acid decarboxylases.</title>
        <authorList>
            <person name="Ikai H."/>
            <person name="Yamamoto S."/>
        </authorList>
    </citation>
    <scope>NUCLEOTIDE SEQUENCE [GENOMIC DNA]</scope>
    <scope>PARTIAL PROTEIN SEQUENCE</scope>
    <source>
        <strain>ATCC 19606 / DSM 30007 / CCUG 19096 / CIP 70.34 / JCM 6841 / LMG 1041 / NBRC 109757 / NCIMB 12457 / NCTC 12156 / 81</strain>
    </source>
</reference>
<organism>
    <name type="scientific">Acinetobacter baumannii</name>
    <dbReference type="NCBI Taxonomy" id="470"/>
    <lineage>
        <taxon>Bacteria</taxon>
        <taxon>Pseudomonadati</taxon>
        <taxon>Pseudomonadota</taxon>
        <taxon>Gammaproteobacteria</taxon>
        <taxon>Moraxellales</taxon>
        <taxon>Moraxellaceae</taxon>
        <taxon>Acinetobacter</taxon>
        <taxon>Acinetobacter calcoaceticus/baumannii complex</taxon>
    </lineage>
</organism>
<name>DDC_ACIBA</name>
<feature type="chain" id="PRO_0000147003" description="L-2,4-diaminobutyrate decarboxylase">
    <location>
        <begin position="1"/>
        <end position="510"/>
    </location>
</feature>
<feature type="modified residue" description="N6-(pyridoxal phosphate)lysine" evidence="1">
    <location>
        <position position="319"/>
    </location>
</feature>
<proteinExistence type="evidence at protein level"/>
<accession>Q43908</accession>
<comment type="catalytic activity">
    <reaction>
        <text>L-2,4-diaminobutanoate + H(+) = propane-1,3-diamine + CO2</text>
        <dbReference type="Rhea" id="RHEA:15689"/>
        <dbReference type="ChEBI" id="CHEBI:15378"/>
        <dbReference type="ChEBI" id="CHEBI:16526"/>
        <dbReference type="ChEBI" id="CHEBI:57484"/>
        <dbReference type="ChEBI" id="CHEBI:58761"/>
        <dbReference type="EC" id="4.1.1.86"/>
    </reaction>
</comment>
<comment type="cofactor">
    <cofactor evidence="1">
        <name>pyridoxal 5'-phosphate</name>
        <dbReference type="ChEBI" id="CHEBI:597326"/>
    </cofactor>
</comment>
<comment type="pathway">
    <text>Amine and polyamine biosynthesis; 1,3-diaminopropane biosynthesis; 1,3-diaminopropane from L-aspartate 4-semialdehyde: step 2/2.</text>
</comment>
<comment type="similarity">
    <text evidence="2">Belongs to the group II decarboxylase family.</text>
</comment>
<gene>
    <name type="primary">ddc</name>
</gene>
<sequence>MVDFAEHRKALLCNDAQSIADYESAMGEAVKAVSAWLQNEKMYTGGSIKELRSAISFQPSKEGMGVQQSLQRMIELFLNKSLKVHHPHSLAHLHCPTMVMSQIAEVLINATNQSMDSWDQSPAGSLMEVQLIDWLRQKVGYGSGQAGVFTSGGTQSNLMGVLLARDWCIAKNWKDENGNPWSVQRDGIPAEAMKNVKVICSENAHFSVQKNMAMMGMGFQSVVTVPVNENAQMDVDALEKTMAHLQAEGKVVACVVATAGTTDAGAIHPLKKIREITNKYGSWMHIDAAWGGALILSNTYRAMLDGIELSDSITLDFHKHYFQSISCGAFLLKDEANYRFMHYEAEYLNSAYDEEHGVPNLVSKSLQTTRRFDALKLWMTIESLGEELYGSMIDHGVKLTREVADYIKATEGLELLVEPQFASVLFRVVPEGYPVEFIDSLNQNVADELFARGEANIGVTKVGNVQSLKMTTLSPVVTVDNVKNLLAQVLAEAERIKDAIASGNYVPPID</sequence>